<sequence>MGTVVGETELNRLNNGLSSNNGSSADEGLEHWNPLKKIHSADSSRRRSTSSQLNQPSNYHMHSSLHEEVSVGSSIASPSSRIPDKAISQYYETSPPSSTSSLSSNNQLMNSSVILSPGQFLPDDANAYGPKASLPPSEMPSHFHPLWSKSASKDSNAFNDPSAIPNPSPLFSSAYATRINGSLRNDKWNRSSFSEALSSSRFSRPQVGQQQPLSSAFPFQPVKQPTEQPGSLHPFMQESKTSPFATRRPSLNTDHHGRPILLSPLNYQNSSLNPSTPSPFGGSPVMHPPVSNLSPRTPAVPMSSDGHLAPAFDFLNENPIWSKRFSISSIKYSAPSTSNASNIAPDSAPPASSQFSVPFNAAAENINDTPDSVLANSPTPRHLPYTWSRHSTSGPSRSTVLNPSTSRMSNYTGLESHLAQLSFKRRSNSATLPSLGSIRPFPISEHSPNINPLDEAAVEDEVKEEKSRFHLGHRRSSTADNGTLSSNVPLYPAYNSSPVQTRTSLFSSRLSKPSNPIVSSVSQANAPKNALHSMPSPTSLANLPSNLSDTQYKKLYNLYLVEFKAGRADVFYIDDNIKLSLNLNDYVVVDADRGQDLGRLIAQNLSQSEVASHIEKIPSDRNGQLQNLDGAILEGDTSQSLHPKRILRKAQPHEVDQLIQKTQDEAQALLVCQAKVRQRKLPMEVLDGEYQWDRKKLTFYYHAKQRIDFRELVRDLFKVYKTRIWMCAVSGTNMSSPASINASTNQFVL</sequence>
<organism>
    <name type="scientific">Schizosaccharomyces pombe (strain 972 / ATCC 24843)</name>
    <name type="common">Fission yeast</name>
    <dbReference type="NCBI Taxonomy" id="284812"/>
    <lineage>
        <taxon>Eukaryota</taxon>
        <taxon>Fungi</taxon>
        <taxon>Dikarya</taxon>
        <taxon>Ascomycota</taxon>
        <taxon>Taphrinomycotina</taxon>
        <taxon>Schizosaccharomycetes</taxon>
        <taxon>Schizosaccharomycetales</taxon>
        <taxon>Schizosaccharomycetaceae</taxon>
        <taxon>Schizosaccharomyces</taxon>
    </lineage>
</organism>
<protein>
    <recommendedName>
        <fullName>Uncharacterized protein PB7E8.02</fullName>
    </recommendedName>
</protein>
<gene>
    <name type="ORF">SPBPB7E8.02</name>
</gene>
<dbReference type="EMBL" id="CU329671">
    <property type="protein sequence ID" value="CAC36932.1"/>
    <property type="molecule type" value="Genomic_DNA"/>
</dbReference>
<dbReference type="RefSeq" id="NP_596455.1">
    <property type="nucleotide sequence ID" value="NM_001022374.2"/>
</dbReference>
<dbReference type="BioGRID" id="277865">
    <property type="interactions" value="6"/>
</dbReference>
<dbReference type="FunCoup" id="Q9C0V4">
    <property type="interactions" value="417"/>
</dbReference>
<dbReference type="iPTMnet" id="Q9C0V4"/>
<dbReference type="PaxDb" id="4896-SPBPB7E8.02.1"/>
<dbReference type="EnsemblFungi" id="SPBPB7E8.02.1">
    <property type="protein sequence ID" value="SPBPB7E8.02.1:pep"/>
    <property type="gene ID" value="SPBPB7E8.02"/>
</dbReference>
<dbReference type="KEGG" id="spo:2541354"/>
<dbReference type="PomBase" id="SPBPB7E8.02"/>
<dbReference type="VEuPathDB" id="FungiDB:SPBPB7E8.02"/>
<dbReference type="eggNOG" id="KOG4679">
    <property type="taxonomic scope" value="Eukaryota"/>
</dbReference>
<dbReference type="HOGENOM" id="CLU_371372_0_0_1"/>
<dbReference type="InParanoid" id="Q9C0V4"/>
<dbReference type="OMA" id="HAKQRID"/>
<dbReference type="PRO" id="PR:Q9C0V4"/>
<dbReference type="Proteomes" id="UP000002485">
    <property type="component" value="Chromosome II"/>
</dbReference>
<dbReference type="GO" id="GO:0005737">
    <property type="term" value="C:cytoplasm"/>
    <property type="evidence" value="ECO:0000318"/>
    <property type="project" value="GO_Central"/>
</dbReference>
<dbReference type="GO" id="GO:0003729">
    <property type="term" value="F:mRNA binding"/>
    <property type="evidence" value="ECO:0000318"/>
    <property type="project" value="GO_Central"/>
</dbReference>
<dbReference type="InterPro" id="IPR047767">
    <property type="entry name" value="PSP1-like"/>
</dbReference>
<dbReference type="InterPro" id="IPR007557">
    <property type="entry name" value="PSP1_C"/>
</dbReference>
<dbReference type="NCBIfam" id="NF041131">
    <property type="entry name" value="RicT_YaaT_fam"/>
    <property type="match status" value="1"/>
</dbReference>
<dbReference type="PANTHER" id="PTHR43830">
    <property type="entry name" value="PROTEIN PSP1"/>
    <property type="match status" value="1"/>
</dbReference>
<dbReference type="PANTHER" id="PTHR43830:SF3">
    <property type="entry name" value="PROTEIN PSP1"/>
    <property type="match status" value="1"/>
</dbReference>
<dbReference type="Pfam" id="PF04468">
    <property type="entry name" value="PSP1"/>
    <property type="match status" value="1"/>
</dbReference>
<dbReference type="PROSITE" id="PS51411">
    <property type="entry name" value="PSP1_C"/>
    <property type="match status" value="1"/>
</dbReference>
<keyword id="KW-1185">Reference proteome</keyword>
<proteinExistence type="predicted"/>
<name>YOM2_SCHPO</name>
<accession>Q9C0V4</accession>
<reference key="1">
    <citation type="journal article" date="2002" name="Nature">
        <title>The genome sequence of Schizosaccharomyces pombe.</title>
        <authorList>
            <person name="Wood V."/>
            <person name="Gwilliam R."/>
            <person name="Rajandream M.A."/>
            <person name="Lyne M.H."/>
            <person name="Lyne R."/>
            <person name="Stewart A."/>
            <person name="Sgouros J.G."/>
            <person name="Peat N."/>
            <person name="Hayles J."/>
            <person name="Baker S.G."/>
            <person name="Basham D."/>
            <person name="Bowman S."/>
            <person name="Brooks K."/>
            <person name="Brown D."/>
            <person name="Brown S."/>
            <person name="Chillingworth T."/>
            <person name="Churcher C.M."/>
            <person name="Collins M."/>
            <person name="Connor R."/>
            <person name="Cronin A."/>
            <person name="Davis P."/>
            <person name="Feltwell T."/>
            <person name="Fraser A."/>
            <person name="Gentles S."/>
            <person name="Goble A."/>
            <person name="Hamlin N."/>
            <person name="Harris D.E."/>
            <person name="Hidalgo J."/>
            <person name="Hodgson G."/>
            <person name="Holroyd S."/>
            <person name="Hornsby T."/>
            <person name="Howarth S."/>
            <person name="Huckle E.J."/>
            <person name="Hunt S."/>
            <person name="Jagels K."/>
            <person name="James K.D."/>
            <person name="Jones L."/>
            <person name="Jones M."/>
            <person name="Leather S."/>
            <person name="McDonald S."/>
            <person name="McLean J."/>
            <person name="Mooney P."/>
            <person name="Moule S."/>
            <person name="Mungall K.L."/>
            <person name="Murphy L.D."/>
            <person name="Niblett D."/>
            <person name="Odell C."/>
            <person name="Oliver K."/>
            <person name="O'Neil S."/>
            <person name="Pearson D."/>
            <person name="Quail M.A."/>
            <person name="Rabbinowitsch E."/>
            <person name="Rutherford K.M."/>
            <person name="Rutter S."/>
            <person name="Saunders D."/>
            <person name="Seeger K."/>
            <person name="Sharp S."/>
            <person name="Skelton J."/>
            <person name="Simmonds M.N."/>
            <person name="Squares R."/>
            <person name="Squares S."/>
            <person name="Stevens K."/>
            <person name="Taylor K."/>
            <person name="Taylor R.G."/>
            <person name="Tivey A."/>
            <person name="Walsh S.V."/>
            <person name="Warren T."/>
            <person name="Whitehead S."/>
            <person name="Woodward J.R."/>
            <person name="Volckaert G."/>
            <person name="Aert R."/>
            <person name="Robben J."/>
            <person name="Grymonprez B."/>
            <person name="Weltjens I."/>
            <person name="Vanstreels E."/>
            <person name="Rieger M."/>
            <person name="Schaefer M."/>
            <person name="Mueller-Auer S."/>
            <person name="Gabel C."/>
            <person name="Fuchs M."/>
            <person name="Duesterhoeft A."/>
            <person name="Fritzc C."/>
            <person name="Holzer E."/>
            <person name="Moestl D."/>
            <person name="Hilbert H."/>
            <person name="Borzym K."/>
            <person name="Langer I."/>
            <person name="Beck A."/>
            <person name="Lehrach H."/>
            <person name="Reinhardt R."/>
            <person name="Pohl T.M."/>
            <person name="Eger P."/>
            <person name="Zimmermann W."/>
            <person name="Wedler H."/>
            <person name="Wambutt R."/>
            <person name="Purnelle B."/>
            <person name="Goffeau A."/>
            <person name="Cadieu E."/>
            <person name="Dreano S."/>
            <person name="Gloux S."/>
            <person name="Lelaure V."/>
            <person name="Mottier S."/>
            <person name="Galibert F."/>
            <person name="Aves S.J."/>
            <person name="Xiang Z."/>
            <person name="Hunt C."/>
            <person name="Moore K."/>
            <person name="Hurst S.M."/>
            <person name="Lucas M."/>
            <person name="Rochet M."/>
            <person name="Gaillardin C."/>
            <person name="Tallada V.A."/>
            <person name="Garzon A."/>
            <person name="Thode G."/>
            <person name="Daga R.R."/>
            <person name="Cruzado L."/>
            <person name="Jimenez J."/>
            <person name="Sanchez M."/>
            <person name="del Rey F."/>
            <person name="Benito J."/>
            <person name="Dominguez A."/>
            <person name="Revuelta J.L."/>
            <person name="Moreno S."/>
            <person name="Armstrong J."/>
            <person name="Forsburg S.L."/>
            <person name="Cerutti L."/>
            <person name="Lowe T."/>
            <person name="McCombie W.R."/>
            <person name="Paulsen I."/>
            <person name="Potashkin J."/>
            <person name="Shpakovski G.V."/>
            <person name="Ussery D."/>
            <person name="Barrell B.G."/>
            <person name="Nurse P."/>
        </authorList>
    </citation>
    <scope>NUCLEOTIDE SEQUENCE [LARGE SCALE GENOMIC DNA]</scope>
    <source>
        <strain>972 / ATCC 24843</strain>
    </source>
</reference>
<evidence type="ECO:0000255" key="1">
    <source>
        <dbReference type="PROSITE-ProRule" id="PRU00744"/>
    </source>
</evidence>
<evidence type="ECO:0000256" key="2">
    <source>
        <dbReference type="SAM" id="MobiDB-lite"/>
    </source>
</evidence>
<feature type="chain" id="PRO_0000372373" description="Uncharacterized protein PB7E8.02">
    <location>
        <begin position="1"/>
        <end position="749"/>
    </location>
</feature>
<feature type="domain" description="PSP1 C-terminal" evidence="1">
    <location>
        <begin position="644"/>
        <end position="729"/>
    </location>
</feature>
<feature type="region of interest" description="Disordered" evidence="2">
    <location>
        <begin position="1"/>
        <end position="58"/>
    </location>
</feature>
<feature type="region of interest" description="Disordered" evidence="2">
    <location>
        <begin position="124"/>
        <end position="170"/>
    </location>
</feature>
<feature type="region of interest" description="Disordered" evidence="2">
    <location>
        <begin position="200"/>
        <end position="291"/>
    </location>
</feature>
<feature type="region of interest" description="Disordered" evidence="2">
    <location>
        <begin position="385"/>
        <end position="405"/>
    </location>
</feature>
<feature type="compositionally biased region" description="Low complexity" evidence="2">
    <location>
        <begin position="13"/>
        <end position="24"/>
    </location>
</feature>
<feature type="compositionally biased region" description="Polar residues" evidence="2">
    <location>
        <begin position="149"/>
        <end position="159"/>
    </location>
</feature>
<feature type="compositionally biased region" description="Polar residues" evidence="2">
    <location>
        <begin position="238"/>
        <end position="252"/>
    </location>
</feature>
<feature type="compositionally biased region" description="Polar residues" evidence="2">
    <location>
        <begin position="265"/>
        <end position="275"/>
    </location>
</feature>
<feature type="compositionally biased region" description="Polar residues" evidence="2">
    <location>
        <begin position="388"/>
        <end position="405"/>
    </location>
</feature>